<comment type="alternative products">
    <event type="alternative splicing"/>
    <isoform>
        <id>Q8C790-1</id>
        <name>1</name>
        <sequence type="displayed"/>
    </isoform>
    <isoform>
        <id>Q8C790-2</id>
        <name>2</name>
        <sequence type="described" ref="VSP_026740 VSP_026741"/>
    </isoform>
</comment>
<comment type="similarity">
    <text evidence="3">Belongs to the FAM221 family.</text>
</comment>
<feature type="chain" id="PRO_0000295140" description="Protein FAM221A">
    <location>
        <begin position="1"/>
        <end position="301"/>
    </location>
</feature>
<feature type="region of interest" description="Disordered" evidence="1">
    <location>
        <begin position="235"/>
        <end position="271"/>
    </location>
</feature>
<feature type="splice variant" id="VSP_026740" description="In isoform 2." evidence="2">
    <original>VGPSTQL</original>
    <variation>DKAGKGC</variation>
    <location>
        <begin position="252"/>
        <end position="258"/>
    </location>
</feature>
<feature type="splice variant" id="VSP_026741" description="In isoform 2." evidence="2">
    <location>
        <begin position="259"/>
        <end position="301"/>
    </location>
</feature>
<gene>
    <name type="primary">Fam221a</name>
</gene>
<accession>Q8C790</accession>
<accession>Q7TML5</accession>
<evidence type="ECO:0000256" key="1">
    <source>
        <dbReference type="SAM" id="MobiDB-lite"/>
    </source>
</evidence>
<evidence type="ECO:0000303" key="2">
    <source>
    </source>
</evidence>
<evidence type="ECO:0000305" key="3"/>
<protein>
    <recommendedName>
        <fullName>Protein FAM221A</fullName>
    </recommendedName>
</protein>
<proteinExistence type="evidence at protein level"/>
<name>F221A_MOUSE</name>
<reference key="1">
    <citation type="journal article" date="2005" name="Science">
        <title>The transcriptional landscape of the mammalian genome.</title>
        <authorList>
            <person name="Carninci P."/>
            <person name="Kasukawa T."/>
            <person name="Katayama S."/>
            <person name="Gough J."/>
            <person name="Frith M.C."/>
            <person name="Maeda N."/>
            <person name="Oyama R."/>
            <person name="Ravasi T."/>
            <person name="Lenhard B."/>
            <person name="Wells C."/>
            <person name="Kodzius R."/>
            <person name="Shimokawa K."/>
            <person name="Bajic V.B."/>
            <person name="Brenner S.E."/>
            <person name="Batalov S."/>
            <person name="Forrest A.R."/>
            <person name="Zavolan M."/>
            <person name="Davis M.J."/>
            <person name="Wilming L.G."/>
            <person name="Aidinis V."/>
            <person name="Allen J.E."/>
            <person name="Ambesi-Impiombato A."/>
            <person name="Apweiler R."/>
            <person name="Aturaliya R.N."/>
            <person name="Bailey T.L."/>
            <person name="Bansal M."/>
            <person name="Baxter L."/>
            <person name="Beisel K.W."/>
            <person name="Bersano T."/>
            <person name="Bono H."/>
            <person name="Chalk A.M."/>
            <person name="Chiu K.P."/>
            <person name="Choudhary V."/>
            <person name="Christoffels A."/>
            <person name="Clutterbuck D.R."/>
            <person name="Crowe M.L."/>
            <person name="Dalla E."/>
            <person name="Dalrymple B.P."/>
            <person name="de Bono B."/>
            <person name="Della Gatta G."/>
            <person name="di Bernardo D."/>
            <person name="Down T."/>
            <person name="Engstrom P."/>
            <person name="Fagiolini M."/>
            <person name="Faulkner G."/>
            <person name="Fletcher C.F."/>
            <person name="Fukushima T."/>
            <person name="Furuno M."/>
            <person name="Futaki S."/>
            <person name="Gariboldi M."/>
            <person name="Georgii-Hemming P."/>
            <person name="Gingeras T.R."/>
            <person name="Gojobori T."/>
            <person name="Green R.E."/>
            <person name="Gustincich S."/>
            <person name="Harbers M."/>
            <person name="Hayashi Y."/>
            <person name="Hensch T.K."/>
            <person name="Hirokawa N."/>
            <person name="Hill D."/>
            <person name="Huminiecki L."/>
            <person name="Iacono M."/>
            <person name="Ikeo K."/>
            <person name="Iwama A."/>
            <person name="Ishikawa T."/>
            <person name="Jakt M."/>
            <person name="Kanapin A."/>
            <person name="Katoh M."/>
            <person name="Kawasawa Y."/>
            <person name="Kelso J."/>
            <person name="Kitamura H."/>
            <person name="Kitano H."/>
            <person name="Kollias G."/>
            <person name="Krishnan S.P."/>
            <person name="Kruger A."/>
            <person name="Kummerfeld S.K."/>
            <person name="Kurochkin I.V."/>
            <person name="Lareau L.F."/>
            <person name="Lazarevic D."/>
            <person name="Lipovich L."/>
            <person name="Liu J."/>
            <person name="Liuni S."/>
            <person name="McWilliam S."/>
            <person name="Madan Babu M."/>
            <person name="Madera M."/>
            <person name="Marchionni L."/>
            <person name="Matsuda H."/>
            <person name="Matsuzawa S."/>
            <person name="Miki H."/>
            <person name="Mignone F."/>
            <person name="Miyake S."/>
            <person name="Morris K."/>
            <person name="Mottagui-Tabar S."/>
            <person name="Mulder N."/>
            <person name="Nakano N."/>
            <person name="Nakauchi H."/>
            <person name="Ng P."/>
            <person name="Nilsson R."/>
            <person name="Nishiguchi S."/>
            <person name="Nishikawa S."/>
            <person name="Nori F."/>
            <person name="Ohara O."/>
            <person name="Okazaki Y."/>
            <person name="Orlando V."/>
            <person name="Pang K.C."/>
            <person name="Pavan W.J."/>
            <person name="Pavesi G."/>
            <person name="Pesole G."/>
            <person name="Petrovsky N."/>
            <person name="Piazza S."/>
            <person name="Reed J."/>
            <person name="Reid J.F."/>
            <person name="Ring B.Z."/>
            <person name="Ringwald M."/>
            <person name="Rost B."/>
            <person name="Ruan Y."/>
            <person name="Salzberg S.L."/>
            <person name="Sandelin A."/>
            <person name="Schneider C."/>
            <person name="Schoenbach C."/>
            <person name="Sekiguchi K."/>
            <person name="Semple C.A."/>
            <person name="Seno S."/>
            <person name="Sessa L."/>
            <person name="Sheng Y."/>
            <person name="Shibata Y."/>
            <person name="Shimada H."/>
            <person name="Shimada K."/>
            <person name="Silva D."/>
            <person name="Sinclair B."/>
            <person name="Sperling S."/>
            <person name="Stupka E."/>
            <person name="Sugiura K."/>
            <person name="Sultana R."/>
            <person name="Takenaka Y."/>
            <person name="Taki K."/>
            <person name="Tammoja K."/>
            <person name="Tan S.L."/>
            <person name="Tang S."/>
            <person name="Taylor M.S."/>
            <person name="Tegner J."/>
            <person name="Teichmann S.A."/>
            <person name="Ueda H.R."/>
            <person name="van Nimwegen E."/>
            <person name="Verardo R."/>
            <person name="Wei C.L."/>
            <person name="Yagi K."/>
            <person name="Yamanishi H."/>
            <person name="Zabarovsky E."/>
            <person name="Zhu S."/>
            <person name="Zimmer A."/>
            <person name="Hide W."/>
            <person name="Bult C."/>
            <person name="Grimmond S.M."/>
            <person name="Teasdale R.D."/>
            <person name="Liu E.T."/>
            <person name="Brusic V."/>
            <person name="Quackenbush J."/>
            <person name="Wahlestedt C."/>
            <person name="Mattick J.S."/>
            <person name="Hume D.A."/>
            <person name="Kai C."/>
            <person name="Sasaki D."/>
            <person name="Tomaru Y."/>
            <person name="Fukuda S."/>
            <person name="Kanamori-Katayama M."/>
            <person name="Suzuki M."/>
            <person name="Aoki J."/>
            <person name="Arakawa T."/>
            <person name="Iida J."/>
            <person name="Imamura K."/>
            <person name="Itoh M."/>
            <person name="Kato T."/>
            <person name="Kawaji H."/>
            <person name="Kawagashira N."/>
            <person name="Kawashima T."/>
            <person name="Kojima M."/>
            <person name="Kondo S."/>
            <person name="Konno H."/>
            <person name="Nakano K."/>
            <person name="Ninomiya N."/>
            <person name="Nishio T."/>
            <person name="Okada M."/>
            <person name="Plessy C."/>
            <person name="Shibata K."/>
            <person name="Shiraki T."/>
            <person name="Suzuki S."/>
            <person name="Tagami M."/>
            <person name="Waki K."/>
            <person name="Watahiki A."/>
            <person name="Okamura-Oho Y."/>
            <person name="Suzuki H."/>
            <person name="Kawai J."/>
            <person name="Hayashizaki Y."/>
        </authorList>
    </citation>
    <scope>NUCLEOTIDE SEQUENCE [LARGE SCALE MRNA] (ISOFORM 1)</scope>
    <source>
        <strain>C57BL/6J</strain>
        <tissue>Heart</tissue>
    </source>
</reference>
<reference key="2">
    <citation type="journal article" date="2004" name="Genome Res.">
        <title>The status, quality, and expansion of the NIH full-length cDNA project: the Mammalian Gene Collection (MGC).</title>
        <authorList>
            <consortium name="The MGC Project Team"/>
        </authorList>
    </citation>
    <scope>NUCLEOTIDE SEQUENCE [LARGE SCALE MRNA] (ISOFORM 2)</scope>
    <source>
        <strain>FVB/N</strain>
        <tissue>Mammary tumor</tissue>
    </source>
</reference>
<reference key="3">
    <citation type="journal article" date="2010" name="Cell">
        <title>A tissue-specific atlas of mouse protein phosphorylation and expression.</title>
        <authorList>
            <person name="Huttlin E.L."/>
            <person name="Jedrychowski M.P."/>
            <person name="Elias J.E."/>
            <person name="Goswami T."/>
            <person name="Rad R."/>
            <person name="Beausoleil S.A."/>
            <person name="Villen J."/>
            <person name="Haas W."/>
            <person name="Sowa M.E."/>
            <person name="Gygi S.P."/>
        </authorList>
    </citation>
    <scope>IDENTIFICATION BY MASS SPECTROMETRY [LARGE SCALE ANALYSIS]</scope>
    <source>
        <tissue>Lung</tissue>
        <tissue>Testis</tissue>
    </source>
</reference>
<dbReference type="EMBL" id="AK052323">
    <property type="protein sequence ID" value="BAC34936.1"/>
    <property type="molecule type" value="mRNA"/>
</dbReference>
<dbReference type="EMBL" id="BC055818">
    <property type="protein sequence ID" value="AAH55818.1"/>
    <property type="molecule type" value="mRNA"/>
</dbReference>
<dbReference type="CCDS" id="CCDS20126.1">
    <molecule id="Q8C790-1"/>
</dbReference>
<dbReference type="CCDS" id="CCDS51769.1">
    <molecule id="Q8C790-2"/>
</dbReference>
<dbReference type="RefSeq" id="NP_001165687.1">
    <molecule id="Q8C790-2"/>
    <property type="nucleotide sequence ID" value="NM_001172216.1"/>
</dbReference>
<dbReference type="RefSeq" id="NP_766315.1">
    <molecule id="Q8C790-1"/>
    <property type="nucleotide sequence ID" value="NM_172727.3"/>
</dbReference>
<dbReference type="RefSeq" id="XP_006506003.1">
    <molecule id="Q8C790-1"/>
    <property type="nucleotide sequence ID" value="XM_006505940.4"/>
</dbReference>
<dbReference type="RefSeq" id="XP_006506004.1">
    <molecule id="Q8C790-1"/>
    <property type="nucleotide sequence ID" value="XM_006505941.4"/>
</dbReference>
<dbReference type="RefSeq" id="XP_036021928.1">
    <molecule id="Q8C790-2"/>
    <property type="nucleotide sequence ID" value="XM_036166035.1"/>
</dbReference>
<dbReference type="FunCoup" id="Q8C790">
    <property type="interactions" value="15"/>
</dbReference>
<dbReference type="STRING" id="10090.ENSMUSP00000050237"/>
<dbReference type="GlyGen" id="Q8C790">
    <property type="glycosylation" value="2 sites, 1 O-linked glycan (2 sites)"/>
</dbReference>
<dbReference type="iPTMnet" id="Q8C790"/>
<dbReference type="PhosphoSitePlus" id="Q8C790"/>
<dbReference type="SwissPalm" id="Q8C790"/>
<dbReference type="PaxDb" id="10090-ENSMUSP00000050237"/>
<dbReference type="PeptideAtlas" id="Q8C790"/>
<dbReference type="ProteomicsDB" id="271535">
    <molecule id="Q8C790-1"/>
</dbReference>
<dbReference type="ProteomicsDB" id="271536">
    <molecule id="Q8C790-2"/>
</dbReference>
<dbReference type="Antibodypedia" id="12123">
    <property type="antibodies" value="39 antibodies from 8 providers"/>
</dbReference>
<dbReference type="Ensembl" id="ENSMUST00000060561.15">
    <molecule id="Q8C790-1"/>
    <property type="protein sequence ID" value="ENSMUSP00000050237.9"/>
    <property type="gene ID" value="ENSMUSG00000047115.16"/>
</dbReference>
<dbReference type="Ensembl" id="ENSMUST00000121903.2">
    <molecule id="Q8C790-2"/>
    <property type="protein sequence ID" value="ENSMUSP00000113242.2"/>
    <property type="gene ID" value="ENSMUSG00000047115.16"/>
</dbReference>
<dbReference type="GeneID" id="231946"/>
<dbReference type="KEGG" id="mmu:231946"/>
<dbReference type="UCSC" id="uc009bwr.2">
    <molecule id="Q8C790-1"/>
    <property type="organism name" value="mouse"/>
</dbReference>
<dbReference type="UCSC" id="uc012elr.1">
    <molecule id="Q8C790-2"/>
    <property type="organism name" value="mouse"/>
</dbReference>
<dbReference type="AGR" id="MGI:2442161"/>
<dbReference type="CTD" id="340277"/>
<dbReference type="MGI" id="MGI:2442161">
    <property type="gene designation" value="Fam221a"/>
</dbReference>
<dbReference type="VEuPathDB" id="HostDB:ENSMUSG00000047115"/>
<dbReference type="eggNOG" id="ENOG502QR3M">
    <property type="taxonomic scope" value="Eukaryota"/>
</dbReference>
<dbReference type="GeneTree" id="ENSGT00770000120611"/>
<dbReference type="HOGENOM" id="CLU_080852_0_0_1"/>
<dbReference type="InParanoid" id="Q8C790"/>
<dbReference type="OMA" id="HDWMATE"/>
<dbReference type="OrthoDB" id="310364at2759"/>
<dbReference type="PhylomeDB" id="Q8C790"/>
<dbReference type="TreeFam" id="TF329392"/>
<dbReference type="BioGRID-ORCS" id="231946">
    <property type="hits" value="2 hits in 75 CRISPR screens"/>
</dbReference>
<dbReference type="PRO" id="PR:Q8C790"/>
<dbReference type="Proteomes" id="UP000000589">
    <property type="component" value="Chromosome 6"/>
</dbReference>
<dbReference type="RNAct" id="Q8C790">
    <property type="molecule type" value="protein"/>
</dbReference>
<dbReference type="Bgee" id="ENSMUSG00000047115">
    <property type="expression patterns" value="Expressed in spermatocyte and 150 other cell types or tissues"/>
</dbReference>
<dbReference type="ExpressionAtlas" id="Q8C790">
    <property type="expression patterns" value="baseline and differential"/>
</dbReference>
<dbReference type="InterPro" id="IPR026755">
    <property type="entry name" value="Fam221a/b"/>
</dbReference>
<dbReference type="PANTHER" id="PTHR31214:SF2">
    <property type="entry name" value="PROTEIN FAM221A"/>
    <property type="match status" value="1"/>
</dbReference>
<dbReference type="PANTHER" id="PTHR31214">
    <property type="entry name" value="PROTEIN FAM221A-RELATED"/>
    <property type="match status" value="1"/>
</dbReference>
<dbReference type="Pfam" id="PF14753">
    <property type="entry name" value="FAM221"/>
    <property type="match status" value="1"/>
</dbReference>
<organism>
    <name type="scientific">Mus musculus</name>
    <name type="common">Mouse</name>
    <dbReference type="NCBI Taxonomy" id="10090"/>
    <lineage>
        <taxon>Eukaryota</taxon>
        <taxon>Metazoa</taxon>
        <taxon>Chordata</taxon>
        <taxon>Craniata</taxon>
        <taxon>Vertebrata</taxon>
        <taxon>Euteleostomi</taxon>
        <taxon>Mammalia</taxon>
        <taxon>Eutheria</taxon>
        <taxon>Euarchontoglires</taxon>
        <taxon>Glires</taxon>
        <taxon>Rodentia</taxon>
        <taxon>Myomorpha</taxon>
        <taxon>Muroidea</taxon>
        <taxon>Muridae</taxon>
        <taxon>Murinae</taxon>
        <taxon>Mus</taxon>
        <taxon>Mus</taxon>
    </lineage>
</organism>
<sequence length="301" mass="33346">MERLTLPPGGAEAVDEYLEYRRIVGEDDGGKLFTPEEYEEYKKKVLPMRLQNRLFVSWRSPTGMDCKLVGPETLCFCTHRYKQHKTDFETIPQQRPIALPCRVSGCRCKAYHYVPLNGTQPIRCRCKHFADQHSAALGFTCNACSKCSGFHSCYTCACGQPAYAHDTVVETRQERLAQGKPVGRDVPYAAMGGLTGFSSLAEGYMRLDDSGIGAPSVEVLDSAVSAMDHPFLRAMHAPSTSSPQPLAGGNEVGPSTQLSSLRKPEEDDMAYFERQYQERIKLEKAAKQKGKVPPLPSTKPS</sequence>
<keyword id="KW-0025">Alternative splicing</keyword>
<keyword id="KW-1185">Reference proteome</keyword>